<accession>O27954</accession>
<name>Y2330_ARCFU</name>
<reference key="1">
    <citation type="journal article" date="1997" name="Nature">
        <title>The complete genome sequence of the hyperthermophilic, sulphate-reducing archaeon Archaeoglobus fulgidus.</title>
        <authorList>
            <person name="Klenk H.-P."/>
            <person name="Clayton R.A."/>
            <person name="Tomb J.-F."/>
            <person name="White O."/>
            <person name="Nelson K.E."/>
            <person name="Ketchum K.A."/>
            <person name="Dodson R.J."/>
            <person name="Gwinn M.L."/>
            <person name="Hickey E.K."/>
            <person name="Peterson J.D."/>
            <person name="Richardson D.L."/>
            <person name="Kerlavage A.R."/>
            <person name="Graham D.E."/>
            <person name="Kyrpides N.C."/>
            <person name="Fleischmann R.D."/>
            <person name="Quackenbush J."/>
            <person name="Lee N.H."/>
            <person name="Sutton G.G."/>
            <person name="Gill S.R."/>
            <person name="Kirkness E.F."/>
            <person name="Dougherty B.A."/>
            <person name="McKenney K."/>
            <person name="Adams M.D."/>
            <person name="Loftus B.J."/>
            <person name="Peterson S.N."/>
            <person name="Reich C.I."/>
            <person name="McNeil L.K."/>
            <person name="Badger J.H."/>
            <person name="Glodek A."/>
            <person name="Zhou L."/>
            <person name="Overbeek R."/>
            <person name="Gocayne J.D."/>
            <person name="Weidman J.F."/>
            <person name="McDonald L.A."/>
            <person name="Utterback T.R."/>
            <person name="Cotton M.D."/>
            <person name="Spriggs T."/>
            <person name="Artiach P."/>
            <person name="Kaine B.P."/>
            <person name="Sykes S.M."/>
            <person name="Sadow P.W."/>
            <person name="D'Andrea K.P."/>
            <person name="Bowman C."/>
            <person name="Fujii C."/>
            <person name="Garland S.A."/>
            <person name="Mason T.M."/>
            <person name="Olsen G.J."/>
            <person name="Fraser C.M."/>
            <person name="Smith H.O."/>
            <person name="Woese C.R."/>
            <person name="Venter J.C."/>
        </authorList>
    </citation>
    <scope>NUCLEOTIDE SEQUENCE [LARGE SCALE GENOMIC DNA]</scope>
    <source>
        <strain>ATCC 49558 / DSM 4304 / JCM 9628 / NBRC 100126 / VC-16</strain>
    </source>
</reference>
<gene>
    <name type="ordered locus">AF_2330</name>
</gene>
<dbReference type="EMBL" id="AE000782">
    <property type="protein sequence ID" value="AAB88927.1"/>
    <property type="molecule type" value="Genomic_DNA"/>
</dbReference>
<dbReference type="PIR" id="B69541">
    <property type="entry name" value="B69541"/>
</dbReference>
<dbReference type="RefSeq" id="WP_010879819.1">
    <property type="nucleotide sequence ID" value="NC_000917.1"/>
</dbReference>
<dbReference type="SMR" id="O27954"/>
<dbReference type="STRING" id="224325.AF_2330"/>
<dbReference type="PaxDb" id="224325-AF_2330"/>
<dbReference type="EnsemblBacteria" id="AAB88927">
    <property type="protein sequence ID" value="AAB88927"/>
    <property type="gene ID" value="AF_2330"/>
</dbReference>
<dbReference type="GeneID" id="1485562"/>
<dbReference type="KEGG" id="afu:AF_2330"/>
<dbReference type="eggNOG" id="arCOG03727">
    <property type="taxonomic scope" value="Archaea"/>
</dbReference>
<dbReference type="HOGENOM" id="CLU_1912261_0_0_2"/>
<dbReference type="OrthoDB" id="26378at2157"/>
<dbReference type="PhylomeDB" id="O27954"/>
<dbReference type="Proteomes" id="UP000002199">
    <property type="component" value="Chromosome"/>
</dbReference>
<dbReference type="InterPro" id="IPR011335">
    <property type="entry name" value="Restrct_endonuc-II-like"/>
</dbReference>
<dbReference type="SUPFAM" id="SSF52980">
    <property type="entry name" value="Restriction endonuclease-like"/>
    <property type="match status" value="1"/>
</dbReference>
<proteinExistence type="predicted"/>
<keyword id="KW-1185">Reference proteome</keyword>
<protein>
    <recommendedName>
        <fullName>Uncharacterized protein AF_2330</fullName>
    </recommendedName>
</protein>
<organism>
    <name type="scientific">Archaeoglobus fulgidus (strain ATCC 49558 / DSM 4304 / JCM 9628 / NBRC 100126 / VC-16)</name>
    <dbReference type="NCBI Taxonomy" id="224325"/>
    <lineage>
        <taxon>Archaea</taxon>
        <taxon>Methanobacteriati</taxon>
        <taxon>Methanobacteriota</taxon>
        <taxon>Archaeoglobi</taxon>
        <taxon>Archaeoglobales</taxon>
        <taxon>Archaeoglobaceae</taxon>
        <taxon>Archaeoglobus</taxon>
    </lineage>
</organism>
<feature type="chain" id="PRO_0000128136" description="Uncharacterized protein AF_2330">
    <location>
        <begin position="1"/>
        <end position="129"/>
    </location>
</feature>
<sequence>MRWQEFEGEVRRICEAHDFSTKFRFVFKDEEGRAEIDVVAERYGIVLCFDAKLYSASRYRASQLRREAEKHRRRCERFSALTGKRAIPVVVSLIDDSLRFHSGCIIVPYHSLNEFLTNLHFYLAEFGFL</sequence>